<feature type="chain" id="PRO_1000119189" description="Glutamate racemase">
    <location>
        <begin position="1"/>
        <end position="283"/>
    </location>
</feature>
<feature type="active site" description="Proton donor/acceptor" evidence="1">
    <location>
        <position position="76"/>
    </location>
</feature>
<feature type="active site" description="Proton donor/acceptor" evidence="1">
    <location>
        <position position="186"/>
    </location>
</feature>
<feature type="binding site" evidence="1">
    <location>
        <begin position="13"/>
        <end position="14"/>
    </location>
    <ligand>
        <name>substrate</name>
    </ligand>
</feature>
<feature type="binding site" evidence="1">
    <location>
        <begin position="45"/>
        <end position="46"/>
    </location>
    <ligand>
        <name>substrate</name>
    </ligand>
</feature>
<feature type="binding site" evidence="1">
    <location>
        <begin position="77"/>
        <end position="78"/>
    </location>
    <ligand>
        <name>substrate</name>
    </ligand>
</feature>
<feature type="binding site" evidence="1">
    <location>
        <begin position="187"/>
        <end position="188"/>
    </location>
    <ligand>
        <name>substrate</name>
    </ligand>
</feature>
<dbReference type="EC" id="5.1.1.3" evidence="1"/>
<dbReference type="EMBL" id="AP009552">
    <property type="protein sequence ID" value="BAG05381.1"/>
    <property type="molecule type" value="Genomic_DNA"/>
</dbReference>
<dbReference type="RefSeq" id="WP_012267850.1">
    <property type="nucleotide sequence ID" value="NC_010296.1"/>
</dbReference>
<dbReference type="SMR" id="B0JGW5"/>
<dbReference type="STRING" id="449447.MAE_55590"/>
<dbReference type="PaxDb" id="449447-MAE_55590"/>
<dbReference type="EnsemblBacteria" id="BAG05381">
    <property type="protein sequence ID" value="BAG05381"/>
    <property type="gene ID" value="MAE_55590"/>
</dbReference>
<dbReference type="KEGG" id="mar:MAE_55590"/>
<dbReference type="PATRIC" id="fig|449447.4.peg.5072"/>
<dbReference type="eggNOG" id="COG0796">
    <property type="taxonomic scope" value="Bacteria"/>
</dbReference>
<dbReference type="HOGENOM" id="CLU_052344_0_2_3"/>
<dbReference type="BioCyc" id="MAER449447:MAE_RS24165-MONOMER"/>
<dbReference type="UniPathway" id="UPA00219"/>
<dbReference type="Proteomes" id="UP000001510">
    <property type="component" value="Chromosome"/>
</dbReference>
<dbReference type="GO" id="GO:0008881">
    <property type="term" value="F:glutamate racemase activity"/>
    <property type="evidence" value="ECO:0007669"/>
    <property type="project" value="UniProtKB-UniRule"/>
</dbReference>
<dbReference type="GO" id="GO:0071555">
    <property type="term" value="P:cell wall organization"/>
    <property type="evidence" value="ECO:0007669"/>
    <property type="project" value="UniProtKB-KW"/>
</dbReference>
<dbReference type="GO" id="GO:0009252">
    <property type="term" value="P:peptidoglycan biosynthetic process"/>
    <property type="evidence" value="ECO:0007669"/>
    <property type="project" value="UniProtKB-UniRule"/>
</dbReference>
<dbReference type="GO" id="GO:0008360">
    <property type="term" value="P:regulation of cell shape"/>
    <property type="evidence" value="ECO:0007669"/>
    <property type="project" value="UniProtKB-KW"/>
</dbReference>
<dbReference type="FunFam" id="3.40.50.1860:FF:000002">
    <property type="entry name" value="Glutamate racemase"/>
    <property type="match status" value="1"/>
</dbReference>
<dbReference type="Gene3D" id="3.40.50.1860">
    <property type="match status" value="2"/>
</dbReference>
<dbReference type="HAMAP" id="MF_00258">
    <property type="entry name" value="Glu_racemase"/>
    <property type="match status" value="1"/>
</dbReference>
<dbReference type="InterPro" id="IPR015942">
    <property type="entry name" value="Asp/Glu/hydantoin_racemase"/>
</dbReference>
<dbReference type="InterPro" id="IPR001920">
    <property type="entry name" value="Asp/Glu_race"/>
</dbReference>
<dbReference type="InterPro" id="IPR018187">
    <property type="entry name" value="Asp/Glu_racemase_AS_1"/>
</dbReference>
<dbReference type="InterPro" id="IPR033134">
    <property type="entry name" value="Asp/Glu_racemase_AS_2"/>
</dbReference>
<dbReference type="InterPro" id="IPR004391">
    <property type="entry name" value="Glu_race"/>
</dbReference>
<dbReference type="NCBIfam" id="TIGR00067">
    <property type="entry name" value="glut_race"/>
    <property type="match status" value="1"/>
</dbReference>
<dbReference type="PANTHER" id="PTHR21198">
    <property type="entry name" value="GLUTAMATE RACEMASE"/>
    <property type="match status" value="1"/>
</dbReference>
<dbReference type="PANTHER" id="PTHR21198:SF2">
    <property type="entry name" value="GLUTAMATE RACEMASE"/>
    <property type="match status" value="1"/>
</dbReference>
<dbReference type="Pfam" id="PF01177">
    <property type="entry name" value="Asp_Glu_race"/>
    <property type="match status" value="1"/>
</dbReference>
<dbReference type="SUPFAM" id="SSF53681">
    <property type="entry name" value="Aspartate/glutamate racemase"/>
    <property type="match status" value="2"/>
</dbReference>
<dbReference type="PROSITE" id="PS00923">
    <property type="entry name" value="ASP_GLU_RACEMASE_1"/>
    <property type="match status" value="1"/>
</dbReference>
<dbReference type="PROSITE" id="PS00924">
    <property type="entry name" value="ASP_GLU_RACEMASE_2"/>
    <property type="match status" value="1"/>
</dbReference>
<name>MURI_MICAN</name>
<evidence type="ECO:0000255" key="1">
    <source>
        <dbReference type="HAMAP-Rule" id="MF_00258"/>
    </source>
</evidence>
<accession>B0JGW5</accession>
<proteinExistence type="inferred from homology"/>
<gene>
    <name evidence="1" type="primary">murI</name>
    <name type="ordered locus">MAE_55590</name>
</gene>
<organism>
    <name type="scientific">Microcystis aeruginosa (strain NIES-843 / IAM M-2473)</name>
    <dbReference type="NCBI Taxonomy" id="449447"/>
    <lineage>
        <taxon>Bacteria</taxon>
        <taxon>Bacillati</taxon>
        <taxon>Cyanobacteriota</taxon>
        <taxon>Cyanophyceae</taxon>
        <taxon>Oscillatoriophycideae</taxon>
        <taxon>Chroococcales</taxon>
        <taxon>Microcystaceae</taxon>
        <taxon>Microcystis</taxon>
    </lineage>
</organism>
<keyword id="KW-0133">Cell shape</keyword>
<keyword id="KW-0961">Cell wall biogenesis/degradation</keyword>
<keyword id="KW-0413">Isomerase</keyword>
<keyword id="KW-0573">Peptidoglycan synthesis</keyword>
<comment type="function">
    <text evidence="1">Provides the (R)-glutamate required for cell wall biosynthesis.</text>
</comment>
<comment type="catalytic activity">
    <reaction evidence="1">
        <text>L-glutamate = D-glutamate</text>
        <dbReference type="Rhea" id="RHEA:12813"/>
        <dbReference type="ChEBI" id="CHEBI:29985"/>
        <dbReference type="ChEBI" id="CHEBI:29986"/>
        <dbReference type="EC" id="5.1.1.3"/>
    </reaction>
</comment>
<comment type="pathway">
    <text evidence="1">Cell wall biogenesis; peptidoglycan biosynthesis.</text>
</comment>
<comment type="similarity">
    <text evidence="1">Belongs to the aspartate/glutamate racemases family.</text>
</comment>
<reference key="1">
    <citation type="journal article" date="2007" name="DNA Res.">
        <title>Complete genomic structure of the bloom-forming toxic cyanobacterium Microcystis aeruginosa NIES-843.</title>
        <authorList>
            <person name="Kaneko T."/>
            <person name="Nakajima N."/>
            <person name="Okamoto S."/>
            <person name="Suzuki I."/>
            <person name="Tanabe Y."/>
            <person name="Tamaoki M."/>
            <person name="Nakamura Y."/>
            <person name="Kasai F."/>
            <person name="Watanabe A."/>
            <person name="Kawashima K."/>
            <person name="Kishida Y."/>
            <person name="Ono A."/>
            <person name="Shimizu Y."/>
            <person name="Takahashi C."/>
            <person name="Minami C."/>
            <person name="Fujishiro T."/>
            <person name="Kohara M."/>
            <person name="Katoh M."/>
            <person name="Nakazaki N."/>
            <person name="Nakayama S."/>
            <person name="Yamada M."/>
            <person name="Tabata S."/>
            <person name="Watanabe M.M."/>
        </authorList>
    </citation>
    <scope>NUCLEOTIDE SEQUENCE [LARGE SCALE GENOMIC DNA]</scope>
    <source>
        <strain>NIES-843 / IAM M-247</strain>
    </source>
</reference>
<protein>
    <recommendedName>
        <fullName evidence="1">Glutamate racemase</fullName>
        <ecNumber evidence="1">5.1.1.3</ecNumber>
    </recommendedName>
</protein>
<sequence length="283" mass="31602">MRESQLSPIGVFDSGVGGLTVLRELYRQLPQESILYFADTARLPYGTRSKGEIIEFVLEILTWMSERRVKMVIMACNTSSALALEEVQAEFKDLPILGVILPGAKTAVQKGKRIGVISTPATAKSNAYKQAIQEIDPTAQVWQIPCPEFVPLIEANRIFDPYTTQVAREYLQPLLAENIDTLVYGCTHYRHLSPVLRRLLPSSVRLVDPAASVVRAAEKELELLGLKNPETPLPTNFAVSGDPDTFARLSRQWLGFSPRVEKVYLQCRVKTLGFTDGMKQRPV</sequence>